<organism>
    <name type="scientific">Salmonella typhimurium (strain LT2 / SGSC1412 / ATCC 700720)</name>
    <dbReference type="NCBI Taxonomy" id="99287"/>
    <lineage>
        <taxon>Bacteria</taxon>
        <taxon>Pseudomonadati</taxon>
        <taxon>Pseudomonadota</taxon>
        <taxon>Gammaproteobacteria</taxon>
        <taxon>Enterobacterales</taxon>
        <taxon>Enterobacteriaceae</taxon>
        <taxon>Salmonella</taxon>
    </lineage>
</organism>
<gene>
    <name type="primary">basS</name>
    <name type="synonym">parB</name>
    <name type="synonym">pmrB</name>
    <name type="ordered locus">STM4291</name>
</gene>
<keyword id="KW-0067">ATP-binding</keyword>
<keyword id="KW-0997">Cell inner membrane</keyword>
<keyword id="KW-1003">Cell membrane</keyword>
<keyword id="KW-0418">Kinase</keyword>
<keyword id="KW-0472">Membrane</keyword>
<keyword id="KW-0547">Nucleotide-binding</keyword>
<keyword id="KW-0597">Phosphoprotein</keyword>
<keyword id="KW-1185">Reference proteome</keyword>
<keyword id="KW-0808">Transferase</keyword>
<keyword id="KW-0812">Transmembrane</keyword>
<keyword id="KW-1133">Transmembrane helix</keyword>
<keyword id="KW-0902">Two-component regulatory system</keyword>
<keyword id="KW-0843">Virulence</keyword>
<protein>
    <recommendedName>
        <fullName>Sensor protein BasS</fullName>
        <ecNumber>2.7.13.3</ecNumber>
    </recommendedName>
</protein>
<comment type="function">
    <text evidence="5">Member of the two-component regulatory system BasS/BasR. Autophosphorylates and activates BasR by phosphorylation. Plays a role in the adaptation of the organism to the host environment, in particular to neutrophils, and therefore it plays a role in virulence as well.</text>
</comment>
<comment type="catalytic activity">
    <reaction>
        <text>ATP + protein L-histidine = ADP + protein N-phospho-L-histidine.</text>
        <dbReference type="EC" id="2.7.13.3"/>
    </reaction>
</comment>
<comment type="subcellular location">
    <subcellularLocation>
        <location evidence="1">Cell inner membrane</location>
        <topology evidence="1">Multi-pass membrane protein</topology>
    </subcellularLocation>
</comment>
<comment type="induction">
    <text evidence="5">The eptA-basRS operon is positively autoregulated by BasR under high iron or aluminum concentration conditions.</text>
</comment>
<comment type="PTM">
    <text>Autophosphorylated.</text>
</comment>
<comment type="disruption phenotype">
    <text evidence="6">Abnormal expression of genes encoding virulence proteins (PubMed:32413287). Decreases fitness in the spleen and liver of mouse (PubMed:32413287).</text>
</comment>
<proteinExistence type="evidence at protein level"/>
<feature type="chain" id="PRO_0000074702" description="Sensor protein BasS">
    <location>
        <begin position="1"/>
        <end position="356"/>
    </location>
</feature>
<feature type="topological domain" description="Cytoplasmic" evidence="2">
    <location>
        <begin position="1"/>
        <end position="13"/>
    </location>
</feature>
<feature type="transmembrane region" description="Helical" evidence="2">
    <location>
        <begin position="14"/>
        <end position="34"/>
    </location>
</feature>
<feature type="topological domain" description="Periplasmic" evidence="2">
    <location>
        <begin position="35"/>
        <end position="64"/>
    </location>
</feature>
<feature type="transmembrane region" description="Helical" evidence="2">
    <location>
        <begin position="65"/>
        <end position="88"/>
    </location>
</feature>
<feature type="topological domain" description="Cytoplasmic" evidence="2">
    <location>
        <begin position="89"/>
        <end position="356"/>
    </location>
</feature>
<feature type="domain" description="HAMP" evidence="3">
    <location>
        <begin position="89"/>
        <end position="141"/>
    </location>
</feature>
<feature type="domain" description="Histidine kinase" evidence="4">
    <location>
        <begin position="149"/>
        <end position="356"/>
    </location>
</feature>
<feature type="modified residue" description="Phosphohistidine; by autocatalysis" evidence="4">
    <location>
        <position position="152"/>
    </location>
</feature>
<evidence type="ECO:0000250" key="1"/>
<evidence type="ECO:0000255" key="2"/>
<evidence type="ECO:0000255" key="3">
    <source>
        <dbReference type="PROSITE-ProRule" id="PRU00102"/>
    </source>
</evidence>
<evidence type="ECO:0000255" key="4">
    <source>
        <dbReference type="PROSITE-ProRule" id="PRU00107"/>
    </source>
</evidence>
<evidence type="ECO:0000269" key="5">
    <source>
    </source>
</evidence>
<evidence type="ECO:0000269" key="6">
    <source>
    </source>
</evidence>
<dbReference type="EC" id="2.7.13.3"/>
<dbReference type="EMBL" id="L13395">
    <property type="protein sequence ID" value="AAA72366.1"/>
    <property type="molecule type" value="Genomic_DNA"/>
</dbReference>
<dbReference type="EMBL" id="AE006468">
    <property type="protein sequence ID" value="AAL23115.1"/>
    <property type="molecule type" value="Genomic_DNA"/>
</dbReference>
<dbReference type="PIR" id="C40656">
    <property type="entry name" value="C40656"/>
</dbReference>
<dbReference type="RefSeq" id="NP_463156.1">
    <property type="nucleotide sequence ID" value="NC_003197.2"/>
</dbReference>
<dbReference type="RefSeq" id="WP_001212189.1">
    <property type="nucleotide sequence ID" value="NC_003197.2"/>
</dbReference>
<dbReference type="SMR" id="P36557"/>
<dbReference type="STRING" id="99287.STM4291"/>
<dbReference type="PaxDb" id="99287-STM4291"/>
<dbReference type="GeneID" id="1255817"/>
<dbReference type="KEGG" id="stm:STM4291"/>
<dbReference type="PATRIC" id="fig|99287.12.peg.4513"/>
<dbReference type="HOGENOM" id="CLU_000445_89_37_6"/>
<dbReference type="OMA" id="QLISVFW"/>
<dbReference type="PhylomeDB" id="P36557"/>
<dbReference type="BioCyc" id="SENT99287:STM4291-MONOMER"/>
<dbReference type="BRENDA" id="2.7.13.3">
    <property type="organism ID" value="5542"/>
</dbReference>
<dbReference type="Proteomes" id="UP000001014">
    <property type="component" value="Chromosome"/>
</dbReference>
<dbReference type="GO" id="GO:0005886">
    <property type="term" value="C:plasma membrane"/>
    <property type="evidence" value="ECO:0000318"/>
    <property type="project" value="GO_Central"/>
</dbReference>
<dbReference type="GO" id="GO:0005524">
    <property type="term" value="F:ATP binding"/>
    <property type="evidence" value="ECO:0007669"/>
    <property type="project" value="UniProtKB-KW"/>
</dbReference>
<dbReference type="GO" id="GO:0000155">
    <property type="term" value="F:phosphorelay sensor kinase activity"/>
    <property type="evidence" value="ECO:0007669"/>
    <property type="project" value="InterPro"/>
</dbReference>
<dbReference type="GO" id="GO:0000160">
    <property type="term" value="P:phosphorelay signal transduction system"/>
    <property type="evidence" value="ECO:0000318"/>
    <property type="project" value="GO_Central"/>
</dbReference>
<dbReference type="CDD" id="cd00082">
    <property type="entry name" value="HisKA"/>
    <property type="match status" value="1"/>
</dbReference>
<dbReference type="FunFam" id="1.10.287.130:FF:000026">
    <property type="entry name" value="Two-component system sensor histidine kinase PmrB"/>
    <property type="match status" value="1"/>
</dbReference>
<dbReference type="Gene3D" id="1.10.287.130">
    <property type="match status" value="1"/>
</dbReference>
<dbReference type="Gene3D" id="6.10.340.10">
    <property type="match status" value="1"/>
</dbReference>
<dbReference type="Gene3D" id="3.30.565.10">
    <property type="entry name" value="Histidine kinase-like ATPase, C-terminal domain"/>
    <property type="match status" value="1"/>
</dbReference>
<dbReference type="InterPro" id="IPR003660">
    <property type="entry name" value="HAMP_dom"/>
</dbReference>
<dbReference type="InterPro" id="IPR036890">
    <property type="entry name" value="HATPase_C_sf"/>
</dbReference>
<dbReference type="InterPro" id="IPR005467">
    <property type="entry name" value="His_kinase_dom"/>
</dbReference>
<dbReference type="InterPro" id="IPR003661">
    <property type="entry name" value="HisK_dim/P_dom"/>
</dbReference>
<dbReference type="InterPro" id="IPR036097">
    <property type="entry name" value="HisK_dim/P_sf"/>
</dbReference>
<dbReference type="InterPro" id="IPR004358">
    <property type="entry name" value="Sig_transdc_His_kin-like_C"/>
</dbReference>
<dbReference type="InterPro" id="IPR050428">
    <property type="entry name" value="TCS_sensor_his_kinase"/>
</dbReference>
<dbReference type="NCBIfam" id="NF008025">
    <property type="entry name" value="PRK10755.1"/>
    <property type="match status" value="1"/>
</dbReference>
<dbReference type="PANTHER" id="PTHR45436">
    <property type="entry name" value="SENSOR HISTIDINE KINASE YKOH"/>
    <property type="match status" value="1"/>
</dbReference>
<dbReference type="PANTHER" id="PTHR45436:SF7">
    <property type="entry name" value="SENSOR PROTEIN BASS"/>
    <property type="match status" value="1"/>
</dbReference>
<dbReference type="Pfam" id="PF00672">
    <property type="entry name" value="HAMP"/>
    <property type="match status" value="1"/>
</dbReference>
<dbReference type="Pfam" id="PF02518">
    <property type="entry name" value="HATPase_c"/>
    <property type="match status" value="1"/>
</dbReference>
<dbReference type="Pfam" id="PF00512">
    <property type="entry name" value="HisKA"/>
    <property type="match status" value="1"/>
</dbReference>
<dbReference type="PRINTS" id="PR00344">
    <property type="entry name" value="BCTRLSENSOR"/>
</dbReference>
<dbReference type="SMART" id="SM00304">
    <property type="entry name" value="HAMP"/>
    <property type="match status" value="1"/>
</dbReference>
<dbReference type="SMART" id="SM00387">
    <property type="entry name" value="HATPase_c"/>
    <property type="match status" value="1"/>
</dbReference>
<dbReference type="SMART" id="SM00388">
    <property type="entry name" value="HisKA"/>
    <property type="match status" value="1"/>
</dbReference>
<dbReference type="SUPFAM" id="SSF55874">
    <property type="entry name" value="ATPase domain of HSP90 chaperone/DNA topoisomerase II/histidine kinase"/>
    <property type="match status" value="1"/>
</dbReference>
<dbReference type="SUPFAM" id="SSF47384">
    <property type="entry name" value="Homodimeric domain of signal transducing histidine kinase"/>
    <property type="match status" value="1"/>
</dbReference>
<dbReference type="PROSITE" id="PS50885">
    <property type="entry name" value="HAMP"/>
    <property type="match status" value="1"/>
</dbReference>
<dbReference type="PROSITE" id="PS50109">
    <property type="entry name" value="HIS_KIN"/>
    <property type="match status" value="1"/>
</dbReference>
<reference key="1">
    <citation type="journal article" date="1993" name="J. Bacteriol.">
        <title>Spontaneous pmrA mutants of Salmonella typhimurium LT2 define a new two-component regulatory system with a possible role in virulence.</title>
        <authorList>
            <person name="Roland K.L."/>
            <person name="Martin L.E."/>
            <person name="Esther C.R."/>
            <person name="Spitznagel J.K."/>
        </authorList>
    </citation>
    <scope>NUCLEOTIDE SEQUENCE [GENOMIC DNA]</scope>
    <source>
        <strain>LT2</strain>
    </source>
</reference>
<reference key="2">
    <citation type="journal article" date="2001" name="Nature">
        <title>Complete genome sequence of Salmonella enterica serovar Typhimurium LT2.</title>
        <authorList>
            <person name="McClelland M."/>
            <person name="Sanderson K.E."/>
            <person name="Spieth J."/>
            <person name="Clifton S.W."/>
            <person name="Latreille P."/>
            <person name="Courtney L."/>
            <person name="Porwollik S."/>
            <person name="Ali J."/>
            <person name="Dante M."/>
            <person name="Du F."/>
            <person name="Hou S."/>
            <person name="Layman D."/>
            <person name="Leonard S."/>
            <person name="Nguyen C."/>
            <person name="Scott K."/>
            <person name="Holmes A."/>
            <person name="Grewal N."/>
            <person name="Mulvaney E."/>
            <person name="Ryan E."/>
            <person name="Sun H."/>
            <person name="Florea L."/>
            <person name="Miller W."/>
            <person name="Stoneking T."/>
            <person name="Nhan M."/>
            <person name="Waterston R."/>
            <person name="Wilson R.K."/>
        </authorList>
    </citation>
    <scope>NUCLEOTIDE SEQUENCE [LARGE SCALE GENOMIC DNA]</scope>
    <source>
        <strain>LT2 / SGSC1412 / ATCC 700720</strain>
    </source>
</reference>
<reference key="3">
    <citation type="journal article" date="1999" name="J. Biol. Chem.">
        <title>Molecular characterization of the PmrA regulon.</title>
        <authorList>
            <person name="Woesten M.M.S.M."/>
            <person name="Groisman E.A."/>
        </authorList>
    </citation>
    <scope>FUNCTION</scope>
    <scope>INDUCTION</scope>
    <scope>AUTOPHOSPHORYLATION</scope>
    <source>
        <strain>ATCC 14028s / SGSG 2262</strain>
    </source>
</reference>
<reference key="4">
    <citation type="journal article" date="2020" name="Cell Chem. Biol.">
        <title>Targeting Two-Component Systems Uncovers a Small-Molecule Inhibitor of Salmonella Virulence.</title>
        <authorList>
            <person name="Tsai C.N."/>
            <person name="MacNair C.R."/>
            <person name="Cao M.P.T."/>
            <person name="Perry J.N."/>
            <person name="Magolan J."/>
            <person name="Brown E.D."/>
            <person name="Coombes B.K."/>
        </authorList>
    </citation>
    <scope>DISRUPTION PHENOTYPE</scope>
</reference>
<accession>P36557</accession>
<name>BASS_SALTY</name>
<sequence>MRFQRRAMTLRQRLMLTIGLILLVFQLISTFWLWHESTEQIQLFEQALRDNRNNDRHIMHEIREAVASLIVPGVFMVSLTLLICYQAVRRITRPLAELQKELEARTADNLAPIAIHSSTLEIESVVSAINQLVTRLTTTLDNERLFTADVAHELRTPLSGVRLHLELLSKTHNVDVAPLIARLDQMMDSVSQLLQLARVGQSFSSGNYQEVKLLEDVILPSYDELNTMLETRQQTLLLPESAADVVVRGDATLLRMLLRNLVENAHRYSPEGTHITIHISADPDAIMAVEDEGPGIDESKCGKLSEAFVRMDSRYGGIGLGLSIVSRITQLHQGQFFLQNRTERTGTRAWVLLKKA</sequence>